<accession>Q1JBD6</accession>
<feature type="chain" id="PRO_1000024928" description="D-alanyl carrier protein">
    <location>
        <begin position="1"/>
        <end position="79"/>
    </location>
</feature>
<feature type="domain" description="Carrier" evidence="1">
    <location>
        <begin position="1"/>
        <end position="77"/>
    </location>
</feature>
<feature type="modified residue" description="O-(pantetheine 4'-phosphoryl)serine" evidence="1">
    <location>
        <position position="35"/>
    </location>
</feature>
<name>DLTC_STRPB</name>
<sequence>MSIEETVIELFDRLFMEDVSEMMDEDLFDAGVLDSLGTVELIVELESTFNIKVPISEFGRDDWNTVTKIVQGVEELQHA</sequence>
<dbReference type="EMBL" id="CP000261">
    <property type="protein sequence ID" value="ABF36122.1"/>
    <property type="molecule type" value="Genomic_DNA"/>
</dbReference>
<dbReference type="SMR" id="Q1JBD6"/>
<dbReference type="KEGG" id="spj:MGAS2096_Spy1070"/>
<dbReference type="HOGENOM" id="CLU_108696_19_0_9"/>
<dbReference type="UniPathway" id="UPA00556"/>
<dbReference type="GO" id="GO:0005737">
    <property type="term" value="C:cytoplasm"/>
    <property type="evidence" value="ECO:0007669"/>
    <property type="project" value="UniProtKB-SubCell"/>
</dbReference>
<dbReference type="GO" id="GO:0036370">
    <property type="term" value="F:D-alanyl carrier activity"/>
    <property type="evidence" value="ECO:0007669"/>
    <property type="project" value="UniProtKB-UniRule"/>
</dbReference>
<dbReference type="GO" id="GO:0071555">
    <property type="term" value="P:cell wall organization"/>
    <property type="evidence" value="ECO:0007669"/>
    <property type="project" value="UniProtKB-KW"/>
</dbReference>
<dbReference type="GO" id="GO:0070395">
    <property type="term" value="P:lipoteichoic acid biosynthetic process"/>
    <property type="evidence" value="ECO:0007669"/>
    <property type="project" value="UniProtKB-UniRule"/>
</dbReference>
<dbReference type="Gene3D" id="1.10.1200.10">
    <property type="entry name" value="ACP-like"/>
    <property type="match status" value="1"/>
</dbReference>
<dbReference type="HAMAP" id="MF_00565">
    <property type="entry name" value="DltC"/>
    <property type="match status" value="1"/>
</dbReference>
<dbReference type="InterPro" id="IPR036736">
    <property type="entry name" value="ACP-like_sf"/>
</dbReference>
<dbReference type="InterPro" id="IPR003230">
    <property type="entry name" value="DltC"/>
</dbReference>
<dbReference type="InterPro" id="IPR009081">
    <property type="entry name" value="PP-bd_ACP"/>
</dbReference>
<dbReference type="NCBIfam" id="TIGR01688">
    <property type="entry name" value="dltC"/>
    <property type="match status" value="1"/>
</dbReference>
<dbReference type="NCBIfam" id="NF003464">
    <property type="entry name" value="PRK05087.1"/>
    <property type="match status" value="1"/>
</dbReference>
<dbReference type="Pfam" id="PF00550">
    <property type="entry name" value="PP-binding"/>
    <property type="match status" value="1"/>
</dbReference>
<dbReference type="SUPFAM" id="SSF47336">
    <property type="entry name" value="ACP-like"/>
    <property type="match status" value="1"/>
</dbReference>
<dbReference type="PROSITE" id="PS50075">
    <property type="entry name" value="CARRIER"/>
    <property type="match status" value="1"/>
</dbReference>
<evidence type="ECO:0000255" key="1">
    <source>
        <dbReference type="HAMAP-Rule" id="MF_00565"/>
    </source>
</evidence>
<organism>
    <name type="scientific">Streptococcus pyogenes serotype M12 (strain MGAS2096)</name>
    <dbReference type="NCBI Taxonomy" id="370553"/>
    <lineage>
        <taxon>Bacteria</taxon>
        <taxon>Bacillati</taxon>
        <taxon>Bacillota</taxon>
        <taxon>Bacilli</taxon>
        <taxon>Lactobacillales</taxon>
        <taxon>Streptococcaceae</taxon>
        <taxon>Streptococcus</taxon>
    </lineage>
</organism>
<comment type="function">
    <text evidence="1">Carrier protein involved in the D-alanylation of lipoteichoic acid (LTA). The loading of thioester-linked D-alanine onto DltC is catalyzed by D-alanine--D-alanyl carrier protein ligase DltA. The DltC-carried D-alanyl group is further transferred to cell membrane phosphatidylglycerol (PG) by forming an ester bond, probably catalyzed by DltD. D-alanylation of LTA plays an important role in modulating the properties of the cell wall in Gram-positive bacteria, influencing the net charge of the cell wall.</text>
</comment>
<comment type="pathway">
    <text evidence="1">Cell wall biogenesis; lipoteichoic acid biosynthesis.</text>
</comment>
<comment type="subcellular location">
    <subcellularLocation>
        <location evidence="1">Cytoplasm</location>
    </subcellularLocation>
</comment>
<comment type="PTM">
    <text evidence="1">4'-phosphopantetheine is transferred from CoA to a specific serine of apo-DCP.</text>
</comment>
<comment type="similarity">
    <text evidence="1">Belongs to the DltC family.</text>
</comment>
<keyword id="KW-0961">Cell wall biogenesis/degradation</keyword>
<keyword id="KW-0963">Cytoplasm</keyword>
<keyword id="KW-0596">Phosphopantetheine</keyword>
<keyword id="KW-0597">Phosphoprotein</keyword>
<protein>
    <recommendedName>
        <fullName evidence="1">D-alanyl carrier protein</fullName>
        <shortName evidence="1">DCP</shortName>
    </recommendedName>
    <alternativeName>
        <fullName evidence="1">D-alanine--poly(phosphoribitol) ligase subunit 2</fullName>
    </alternativeName>
</protein>
<gene>
    <name evidence="1" type="primary">dltC</name>
    <name type="ordered locus">MGAS2096_Spy1070</name>
</gene>
<reference key="1">
    <citation type="journal article" date="2006" name="Proc. Natl. Acad. Sci. U.S.A.">
        <title>Molecular genetic anatomy of inter- and intraserotype variation in the human bacterial pathogen group A Streptococcus.</title>
        <authorList>
            <person name="Beres S.B."/>
            <person name="Richter E.W."/>
            <person name="Nagiec M.J."/>
            <person name="Sumby P."/>
            <person name="Porcella S.F."/>
            <person name="DeLeo F.R."/>
            <person name="Musser J.M."/>
        </authorList>
    </citation>
    <scope>NUCLEOTIDE SEQUENCE [LARGE SCALE GENOMIC DNA]</scope>
    <source>
        <strain>MGAS2096</strain>
    </source>
</reference>
<proteinExistence type="inferred from homology"/>